<dbReference type="EMBL" id="CP000319">
    <property type="protein sequence ID" value="ABE62571.1"/>
    <property type="molecule type" value="Genomic_DNA"/>
</dbReference>
<dbReference type="RefSeq" id="WP_011510253.1">
    <property type="nucleotide sequence ID" value="NC_007964.1"/>
</dbReference>
<dbReference type="SMR" id="Q1QMH6"/>
<dbReference type="STRING" id="323097.Nham_1757"/>
<dbReference type="KEGG" id="nha:Nham_1757"/>
<dbReference type="eggNOG" id="COG0232">
    <property type="taxonomic scope" value="Bacteria"/>
</dbReference>
<dbReference type="HOGENOM" id="CLU_028163_1_0_5"/>
<dbReference type="OrthoDB" id="9803619at2"/>
<dbReference type="Proteomes" id="UP000001953">
    <property type="component" value="Chromosome"/>
</dbReference>
<dbReference type="GO" id="GO:0008832">
    <property type="term" value="F:dGTPase activity"/>
    <property type="evidence" value="ECO:0007669"/>
    <property type="project" value="TreeGrafter"/>
</dbReference>
<dbReference type="GO" id="GO:0006203">
    <property type="term" value="P:dGTP catabolic process"/>
    <property type="evidence" value="ECO:0007669"/>
    <property type="project" value="TreeGrafter"/>
</dbReference>
<dbReference type="CDD" id="cd00077">
    <property type="entry name" value="HDc"/>
    <property type="match status" value="1"/>
</dbReference>
<dbReference type="Gene3D" id="1.10.3210.10">
    <property type="entry name" value="Hypothetical protein af1432"/>
    <property type="match status" value="1"/>
</dbReference>
<dbReference type="HAMAP" id="MF_01212">
    <property type="entry name" value="dGTPase_type2"/>
    <property type="match status" value="1"/>
</dbReference>
<dbReference type="InterPro" id="IPR006261">
    <property type="entry name" value="dGTPase"/>
</dbReference>
<dbReference type="InterPro" id="IPR050135">
    <property type="entry name" value="dGTPase-like"/>
</dbReference>
<dbReference type="InterPro" id="IPR023023">
    <property type="entry name" value="dNTPase_2"/>
</dbReference>
<dbReference type="InterPro" id="IPR003607">
    <property type="entry name" value="HD/PDEase_dom"/>
</dbReference>
<dbReference type="InterPro" id="IPR006674">
    <property type="entry name" value="HD_domain"/>
</dbReference>
<dbReference type="InterPro" id="IPR026875">
    <property type="entry name" value="PHydrolase_assoc_dom"/>
</dbReference>
<dbReference type="NCBIfam" id="TIGR01353">
    <property type="entry name" value="dGTP_triPase"/>
    <property type="match status" value="1"/>
</dbReference>
<dbReference type="NCBIfam" id="NF002326">
    <property type="entry name" value="PRK01286.1-1"/>
    <property type="match status" value="1"/>
</dbReference>
<dbReference type="NCBIfam" id="NF002328">
    <property type="entry name" value="PRK01286.1-3"/>
    <property type="match status" value="1"/>
</dbReference>
<dbReference type="PANTHER" id="PTHR11373:SF43">
    <property type="entry name" value="DEOXYGUANOSINETRIPHOSPHATE TRIPHOSPHOHYDROLASE-LIKE PROTEIN"/>
    <property type="match status" value="1"/>
</dbReference>
<dbReference type="PANTHER" id="PTHR11373">
    <property type="entry name" value="DEOXYNUCLEOSIDE TRIPHOSPHATE TRIPHOSPHOHYDROLASE"/>
    <property type="match status" value="1"/>
</dbReference>
<dbReference type="Pfam" id="PF01966">
    <property type="entry name" value="HD"/>
    <property type="match status" value="1"/>
</dbReference>
<dbReference type="Pfam" id="PF13286">
    <property type="entry name" value="HD_assoc"/>
    <property type="match status" value="1"/>
</dbReference>
<dbReference type="SMART" id="SM00471">
    <property type="entry name" value="HDc"/>
    <property type="match status" value="1"/>
</dbReference>
<dbReference type="SUPFAM" id="SSF109604">
    <property type="entry name" value="HD-domain/PDEase-like"/>
    <property type="match status" value="1"/>
</dbReference>
<dbReference type="PROSITE" id="PS51831">
    <property type="entry name" value="HD"/>
    <property type="match status" value="1"/>
</dbReference>
<name>DGTL1_NITHX</name>
<proteinExistence type="inferred from homology"/>
<evidence type="ECO:0000255" key="1">
    <source>
        <dbReference type="HAMAP-Rule" id="MF_01212"/>
    </source>
</evidence>
<evidence type="ECO:0000255" key="2">
    <source>
        <dbReference type="PROSITE-ProRule" id="PRU01175"/>
    </source>
</evidence>
<evidence type="ECO:0000256" key="3">
    <source>
        <dbReference type="SAM" id="MobiDB-lite"/>
    </source>
</evidence>
<protein>
    <recommendedName>
        <fullName evidence="1">Deoxyguanosinetriphosphate triphosphohydrolase-like protein</fullName>
    </recommendedName>
</protein>
<keyword id="KW-0378">Hydrolase</keyword>
<keyword id="KW-1185">Reference proteome</keyword>
<gene>
    <name type="ordered locus">Nham_1757</name>
</gene>
<feature type="chain" id="PRO_1000066430" description="Deoxyguanosinetriphosphate triphosphohydrolase-like protein">
    <location>
        <begin position="1"/>
        <end position="404"/>
    </location>
</feature>
<feature type="domain" description="HD" evidence="2">
    <location>
        <begin position="69"/>
        <end position="217"/>
    </location>
</feature>
<feature type="region of interest" description="Disordered" evidence="3">
    <location>
        <begin position="1"/>
        <end position="32"/>
    </location>
</feature>
<feature type="compositionally biased region" description="Basic and acidic residues" evidence="3">
    <location>
        <begin position="22"/>
        <end position="32"/>
    </location>
</feature>
<organism>
    <name type="scientific">Nitrobacter hamburgensis (strain DSM 10229 / NCIMB 13809 / X14)</name>
    <dbReference type="NCBI Taxonomy" id="323097"/>
    <lineage>
        <taxon>Bacteria</taxon>
        <taxon>Pseudomonadati</taxon>
        <taxon>Pseudomonadota</taxon>
        <taxon>Alphaproteobacteria</taxon>
        <taxon>Hyphomicrobiales</taxon>
        <taxon>Nitrobacteraceae</taxon>
        <taxon>Nitrobacter</taxon>
    </lineage>
</organism>
<accession>Q1QMH6</accession>
<comment type="similarity">
    <text evidence="1">Belongs to the dGTPase family. Type 2 subfamily.</text>
</comment>
<sequence>MAVGMAAPHATYASDPARSRGRLFDEPPSKTRSAFRRDCDRVIHSTAFRRLKHKTQVFVYHEGDHYRTRLTHTLEVAQIARALARQLGLDEDLTEALALAHDLGHPPFGHAGERALDACLDGYGGFDHNAQTLRIVTLLEHRYPDFDGLNLTWETLEGVVKHNGPLADRACNAIGRYQRRGIPVGIADFNRRHDLELWSFASLEAQVAAIADDIAYDAHDIDDGLRAGLFAVDDLKAMPLTAAMIADIARRHPLLDDHRRGAALVRGLISHLITAVVSEAERRLADARPQSVDEVRRHGQALIAFPPAAAEAEALIKAFLKQRMYRHPRVMRVMGEAETIVRDLFARYRDDPAALPAEWLPEDGESRELDAERARRIGNFIAGMTDRFAITEHRRLFDSTPELR</sequence>
<reference key="1">
    <citation type="submission" date="2006-03" db="EMBL/GenBank/DDBJ databases">
        <title>Complete sequence of chromosome of Nitrobacter hamburgensis X14.</title>
        <authorList>
            <consortium name="US DOE Joint Genome Institute"/>
            <person name="Copeland A."/>
            <person name="Lucas S."/>
            <person name="Lapidus A."/>
            <person name="Barry K."/>
            <person name="Detter J.C."/>
            <person name="Glavina del Rio T."/>
            <person name="Hammon N."/>
            <person name="Israni S."/>
            <person name="Dalin E."/>
            <person name="Tice H."/>
            <person name="Pitluck S."/>
            <person name="Chain P."/>
            <person name="Malfatti S."/>
            <person name="Shin M."/>
            <person name="Vergez L."/>
            <person name="Schmutz J."/>
            <person name="Larimer F."/>
            <person name="Land M."/>
            <person name="Hauser L."/>
            <person name="Kyrpides N."/>
            <person name="Ivanova N."/>
            <person name="Ward B."/>
            <person name="Arp D."/>
            <person name="Klotz M."/>
            <person name="Stein L."/>
            <person name="O'Mullan G."/>
            <person name="Starkenburg S."/>
            <person name="Sayavedra L."/>
            <person name="Poret-Peterson A.T."/>
            <person name="Gentry M.E."/>
            <person name="Bruce D."/>
            <person name="Richardson P."/>
        </authorList>
    </citation>
    <scope>NUCLEOTIDE SEQUENCE [LARGE SCALE GENOMIC DNA]</scope>
    <source>
        <strain>DSM 10229 / NCIMB 13809 / X14</strain>
    </source>
</reference>